<evidence type="ECO:0000255" key="1">
    <source>
        <dbReference type="HAMAP-Rule" id="MF_00725"/>
    </source>
</evidence>
<comment type="function">
    <text evidence="1">Functions in complex with FlhC as a master transcriptional regulator that regulates transcription of several flagellar and non-flagellar operons by binding to their promoter region. Activates expression of class 2 flagellar genes, including fliA, which is a flagellum-specific sigma factor that turns on the class 3 genes. Also regulates genes whose products function in a variety of physiological pathways.</text>
</comment>
<comment type="subunit">
    <text evidence="1">Homodimer; disulfide-linked. Forms a heterohexamer composed of two FlhC and four FlhD subunits. Each FlhC binds a FlhD dimer, forming a heterotrimer, and a hexamer assembles by dimerization of two heterotrimers.</text>
</comment>
<comment type="subcellular location">
    <subcellularLocation>
        <location evidence="1">Cytoplasm</location>
    </subcellularLocation>
</comment>
<comment type="domain">
    <text evidence="1">The C-terminal region contains a putative helix-turn-helix (HTH) motif, suggesting that this region may bind DNA.</text>
</comment>
<comment type="similarity">
    <text evidence="1">Belongs to the FlhD family.</text>
</comment>
<proteinExistence type="inferred from homology"/>
<sequence>MSTVELLKHIYDINLSYLLLAQRLINQEKASAMFRLGISDSMADALKELTLPQLVKLAETNQLICNFRFEDSETIEQLTKESRVDDLQQIHTGILLSSNLFRQLSEHDTSATKKRA</sequence>
<keyword id="KW-0010">Activator</keyword>
<keyword id="KW-1005">Bacterial flagellum biogenesis</keyword>
<keyword id="KW-0963">Cytoplasm</keyword>
<keyword id="KW-1015">Disulfide bond</keyword>
<keyword id="KW-0238">DNA-binding</keyword>
<keyword id="KW-1185">Reference proteome</keyword>
<keyword id="KW-0804">Transcription</keyword>
<keyword id="KW-0805">Transcription regulation</keyword>
<accession>B4EYQ7</accession>
<gene>
    <name evidence="1" type="primary">flhD</name>
    <name type="ordered locus">PMI1672</name>
</gene>
<protein>
    <recommendedName>
        <fullName evidence="1">Flagellar transcriptional regulator FlhD</fullName>
    </recommendedName>
</protein>
<reference key="1">
    <citation type="journal article" date="2008" name="J. Bacteriol.">
        <title>Complete genome sequence of uropathogenic Proteus mirabilis, a master of both adherence and motility.</title>
        <authorList>
            <person name="Pearson M.M."/>
            <person name="Sebaihia M."/>
            <person name="Churcher C."/>
            <person name="Quail M.A."/>
            <person name="Seshasayee A.S."/>
            <person name="Luscombe N.M."/>
            <person name="Abdellah Z."/>
            <person name="Arrosmith C."/>
            <person name="Atkin B."/>
            <person name="Chillingworth T."/>
            <person name="Hauser H."/>
            <person name="Jagels K."/>
            <person name="Moule S."/>
            <person name="Mungall K."/>
            <person name="Norbertczak H."/>
            <person name="Rabbinowitsch E."/>
            <person name="Walker D."/>
            <person name="Whithead S."/>
            <person name="Thomson N.R."/>
            <person name="Rather P.N."/>
            <person name="Parkhill J."/>
            <person name="Mobley H.L.T."/>
        </authorList>
    </citation>
    <scope>NUCLEOTIDE SEQUENCE [LARGE SCALE GENOMIC DNA]</scope>
    <source>
        <strain>HI4320</strain>
    </source>
</reference>
<name>FLHD_PROMH</name>
<dbReference type="EMBL" id="AM942759">
    <property type="protein sequence ID" value="CAR43487.1"/>
    <property type="molecule type" value="Genomic_DNA"/>
</dbReference>
<dbReference type="RefSeq" id="WP_004243568.1">
    <property type="nucleotide sequence ID" value="NC_010554.1"/>
</dbReference>
<dbReference type="SMR" id="B4EYQ7"/>
<dbReference type="EnsemblBacteria" id="CAR43487">
    <property type="protein sequence ID" value="CAR43487"/>
    <property type="gene ID" value="PMI1672"/>
</dbReference>
<dbReference type="GeneID" id="6801014"/>
<dbReference type="KEGG" id="pmr:PMI1672"/>
<dbReference type="eggNOG" id="ENOG5031P80">
    <property type="taxonomic scope" value="Bacteria"/>
</dbReference>
<dbReference type="HOGENOM" id="CLU_144160_0_0_6"/>
<dbReference type="Proteomes" id="UP000008319">
    <property type="component" value="Chromosome"/>
</dbReference>
<dbReference type="GO" id="GO:0005737">
    <property type="term" value="C:cytoplasm"/>
    <property type="evidence" value="ECO:0007669"/>
    <property type="project" value="UniProtKB-SubCell"/>
</dbReference>
<dbReference type="GO" id="GO:0003677">
    <property type="term" value="F:DNA binding"/>
    <property type="evidence" value="ECO:0007669"/>
    <property type="project" value="UniProtKB-UniRule"/>
</dbReference>
<dbReference type="GO" id="GO:0044780">
    <property type="term" value="P:bacterial-type flagellum assembly"/>
    <property type="evidence" value="ECO:0007669"/>
    <property type="project" value="InterPro"/>
</dbReference>
<dbReference type="GO" id="GO:0045893">
    <property type="term" value="P:positive regulation of DNA-templated transcription"/>
    <property type="evidence" value="ECO:0007669"/>
    <property type="project" value="InterPro"/>
</dbReference>
<dbReference type="GO" id="GO:1902208">
    <property type="term" value="P:regulation of bacterial-type flagellum assembly"/>
    <property type="evidence" value="ECO:0007669"/>
    <property type="project" value="UniProtKB-UniRule"/>
</dbReference>
<dbReference type="Gene3D" id="1.10.4000.10">
    <property type="entry name" value="Flagellar transcriptional activator FlhD"/>
    <property type="match status" value="1"/>
</dbReference>
<dbReference type="HAMAP" id="MF_00725">
    <property type="entry name" value="FlhD"/>
    <property type="match status" value="1"/>
</dbReference>
<dbReference type="InterPro" id="IPR023559">
    <property type="entry name" value="Flagellar_FlhD"/>
</dbReference>
<dbReference type="InterPro" id="IPR036194">
    <property type="entry name" value="FlhD_sf"/>
</dbReference>
<dbReference type="NCBIfam" id="NF002783">
    <property type="entry name" value="PRK02909.1-1"/>
    <property type="match status" value="1"/>
</dbReference>
<dbReference type="Pfam" id="PF05247">
    <property type="entry name" value="FlhD"/>
    <property type="match status" value="1"/>
</dbReference>
<dbReference type="SUPFAM" id="SSF63592">
    <property type="entry name" value="Flagellar transcriptional activator FlhD"/>
    <property type="match status" value="1"/>
</dbReference>
<organism>
    <name type="scientific">Proteus mirabilis (strain HI4320)</name>
    <dbReference type="NCBI Taxonomy" id="529507"/>
    <lineage>
        <taxon>Bacteria</taxon>
        <taxon>Pseudomonadati</taxon>
        <taxon>Pseudomonadota</taxon>
        <taxon>Gammaproteobacteria</taxon>
        <taxon>Enterobacterales</taxon>
        <taxon>Morganellaceae</taxon>
        <taxon>Proteus</taxon>
    </lineage>
</organism>
<feature type="chain" id="PRO_1000132690" description="Flagellar transcriptional regulator FlhD">
    <location>
        <begin position="1"/>
        <end position="116"/>
    </location>
</feature>
<feature type="disulfide bond" description="Interchain" evidence="1">
    <location>
        <position position="65"/>
    </location>
</feature>